<sequence length="358" mass="40843">MKLTLKNLSMAIMMSTIVMGSSAMAADSNEKIVIAHRGASGYLPEHTLPAKAMAYAQGADYLEQDLVMTKDDNLVVLHDHYLDRVTDVADRFPDRARKDGRYYAIDFTLDEIKSLKFTEGFDIENGKKVQTYPGRFPMGKSDFRVHTFEEEIEFVQGLNHSTGKNIGIYPEIKAPWFHHQEGKDIAAKTLEVLKKYGYTGKDDKVYLQCFDADELKRIKNELEPKMGMELNLVQLIAYTDWNETQQKQPDGSWVNYNYDWMFKPGAMKQVAEYADGIGPDYHMLIEETSQPGNIKLTGMVQDAQQNKLVVHPYTVRSDKLPEYTPDVNQLYDALYNKAGVNGLFTDFPDKAVKFLNKE</sequence>
<comment type="function">
    <text evidence="4">Glycerophosphodiester phosphodiesterase hydrolyzes glycerophosphodiesters into glycerol-3-phosphate (G3P) and the corresponding alcohol.</text>
</comment>
<comment type="catalytic activity">
    <reaction evidence="4">
        <text>a sn-glycero-3-phosphodiester + H2O = an alcohol + sn-glycerol 3-phosphate + H(+)</text>
        <dbReference type="Rhea" id="RHEA:12969"/>
        <dbReference type="ChEBI" id="CHEBI:15377"/>
        <dbReference type="ChEBI" id="CHEBI:15378"/>
        <dbReference type="ChEBI" id="CHEBI:30879"/>
        <dbReference type="ChEBI" id="CHEBI:57597"/>
        <dbReference type="ChEBI" id="CHEBI:83408"/>
        <dbReference type="EC" id="3.1.4.46"/>
    </reaction>
</comment>
<comment type="cofactor">
    <cofactor evidence="4">
        <name>Ca(2+)</name>
        <dbReference type="ChEBI" id="CHEBI:29108"/>
    </cofactor>
    <text evidence="4">Binds 1 Ca(2+) ion per subunit.</text>
</comment>
<comment type="biophysicochemical properties">
    <kinetics>
        <KM evidence="4">0.28 mM for glycerophosphocholine</KM>
        <KM evidence="4">0.24 mM for glycerophosphoethanolamine</KM>
        <KM evidence="4">0.35 mM for glycerophosphoglycerol</KM>
        <KM evidence="4">0.59 mM for glycerophosphoserine</KM>
        <KM evidence="4">1 mM for glycerophosphoinositol</KM>
    </kinetics>
    <phDependence>
        <text evidence="4">Optimum pH is 7.8.</text>
    </phDependence>
</comment>
<comment type="subunit">
    <text evidence="4 6 7">Homodimer.</text>
</comment>
<comment type="subcellular location">
    <subcellularLocation>
        <location evidence="4">Periplasm</location>
    </subcellularLocation>
</comment>
<comment type="miscellaneous">
    <text>There are 2 isozymes of glycerophosphoryl diester phosphodiesterase in E.coli: a periplasmic isozyme (GlpQ) and a cytosolic isozyme (UgpQ).</text>
</comment>
<comment type="similarity">
    <text evidence="8">Belongs to the glycerophosphoryl diester phosphodiesterase family.</text>
</comment>
<keyword id="KW-0002">3D-structure</keyword>
<keyword id="KW-0106">Calcium</keyword>
<keyword id="KW-0903">Direct protein sequencing</keyword>
<keyword id="KW-0319">Glycerol metabolism</keyword>
<keyword id="KW-0378">Hydrolase</keyword>
<keyword id="KW-0479">Metal-binding</keyword>
<keyword id="KW-0574">Periplasm</keyword>
<keyword id="KW-1185">Reference proteome</keyword>
<keyword id="KW-0732">Signal</keyword>
<organism>
    <name type="scientific">Escherichia coli (strain K12)</name>
    <dbReference type="NCBI Taxonomy" id="83333"/>
    <lineage>
        <taxon>Bacteria</taxon>
        <taxon>Pseudomonadati</taxon>
        <taxon>Pseudomonadota</taxon>
        <taxon>Gammaproteobacteria</taxon>
        <taxon>Enterobacterales</taxon>
        <taxon>Enterobacteriaceae</taxon>
        <taxon>Escherichia</taxon>
    </lineage>
</organism>
<name>GLPQ_ECOLI</name>
<protein>
    <recommendedName>
        <fullName>Glycerophosphodiester phosphodiesterase, periplasmic</fullName>
        <shortName>Glycerophosphoryl diester phosphodiesterase, periplasmic</shortName>
        <ecNumber evidence="4">3.1.4.46</ecNumber>
    </recommendedName>
</protein>
<accession>P09394</accession>
<reference key="1">
    <citation type="journal article" date="1991" name="Mol. Gen. Genet.">
        <title>Characterization of two genes, glpQ and ugpQ, encoding glycerophosphoryl diester phosphodiesterases of Escherichia coli.</title>
        <authorList>
            <person name="Tommassen J."/>
            <person name="Eiglmeier K."/>
            <person name="Cole S.T."/>
            <person name="Overduin P."/>
            <person name="Larson T.J."/>
            <person name="Boos W."/>
        </authorList>
    </citation>
    <scope>NUCLEOTIDE SEQUENCE [GENOMIC DNA]</scope>
    <scope>PROTEIN SEQUENCE OF 26-31</scope>
</reference>
<reference key="2">
    <citation type="journal article" date="1997" name="DNA Res.">
        <title>Construction of a contiguous 874-kb sequence of the Escherichia coli-K12 genome corresponding to 50.0-68.8 min on the linkage map and analysis of its sequence features.</title>
        <authorList>
            <person name="Yamamoto Y."/>
            <person name="Aiba H."/>
            <person name="Baba T."/>
            <person name="Hayashi K."/>
            <person name="Inada T."/>
            <person name="Isono K."/>
            <person name="Itoh T."/>
            <person name="Kimura S."/>
            <person name="Kitagawa M."/>
            <person name="Makino K."/>
            <person name="Miki T."/>
            <person name="Mitsuhashi N."/>
            <person name="Mizobuchi K."/>
            <person name="Mori H."/>
            <person name="Nakade S."/>
            <person name="Nakamura Y."/>
            <person name="Nashimoto H."/>
            <person name="Oshima T."/>
            <person name="Oyama S."/>
            <person name="Saito N."/>
            <person name="Sampei G."/>
            <person name="Satoh Y."/>
            <person name="Sivasundaram S."/>
            <person name="Tagami H."/>
            <person name="Takahashi H."/>
            <person name="Takeda J."/>
            <person name="Takemoto K."/>
            <person name="Uehara K."/>
            <person name="Wada C."/>
            <person name="Yamagata S."/>
            <person name="Horiuchi T."/>
        </authorList>
    </citation>
    <scope>NUCLEOTIDE SEQUENCE [LARGE SCALE GENOMIC DNA]</scope>
    <source>
        <strain>K12 / W3110 / ATCC 27325 / DSM 5911</strain>
    </source>
</reference>
<reference key="3">
    <citation type="journal article" date="1997" name="Science">
        <title>The complete genome sequence of Escherichia coli K-12.</title>
        <authorList>
            <person name="Blattner F.R."/>
            <person name="Plunkett G. III"/>
            <person name="Bloch C.A."/>
            <person name="Perna N.T."/>
            <person name="Burland V."/>
            <person name="Riley M."/>
            <person name="Collado-Vides J."/>
            <person name="Glasner J.D."/>
            <person name="Rode C.K."/>
            <person name="Mayhew G.F."/>
            <person name="Gregor J."/>
            <person name="Davis N.W."/>
            <person name="Kirkpatrick H.A."/>
            <person name="Goeden M.A."/>
            <person name="Rose D.J."/>
            <person name="Mau B."/>
            <person name="Shao Y."/>
        </authorList>
    </citation>
    <scope>NUCLEOTIDE SEQUENCE [LARGE SCALE GENOMIC DNA]</scope>
    <source>
        <strain>K12 / MG1655 / ATCC 47076</strain>
    </source>
</reference>
<reference key="4">
    <citation type="journal article" date="2006" name="Mol. Syst. Biol.">
        <title>Highly accurate genome sequences of Escherichia coli K-12 strains MG1655 and W3110.</title>
        <authorList>
            <person name="Hayashi K."/>
            <person name="Morooka N."/>
            <person name="Yamamoto Y."/>
            <person name="Fujita K."/>
            <person name="Isono K."/>
            <person name="Choi S."/>
            <person name="Ohtsubo E."/>
            <person name="Baba T."/>
            <person name="Wanner B.L."/>
            <person name="Mori H."/>
            <person name="Horiuchi T."/>
        </authorList>
    </citation>
    <scope>NUCLEOTIDE SEQUENCE [LARGE SCALE GENOMIC DNA]</scope>
    <source>
        <strain>K12 / W3110 / ATCC 27325 / DSM 5911</strain>
    </source>
</reference>
<reference key="5">
    <citation type="journal article" date="1987" name="Mol. Microbiol.">
        <title>Nucleotide sequence and transcriptional startpoint of the glpT gene of Escherichia coli: extensive sequence homology of the glycerol-3-phosphate transport protein with components of the hexose-6-phosphate transport system.</title>
        <authorList>
            <person name="Eiglmeier K."/>
            <person name="Boos W."/>
            <person name="Cole S."/>
        </authorList>
    </citation>
    <scope>NUCLEOTIDE SEQUENCE [GENOMIC DNA] OF 1-9</scope>
    <source>
        <strain>K12</strain>
    </source>
</reference>
<reference key="6">
    <citation type="journal article" date="1996" name="Mol. Microbiol.">
        <title>FIS is a regulator of metabolism in Escherichia coli.</title>
        <authorList>
            <person name="Gonzalez-Gil G."/>
            <person name="Bringmann P."/>
            <person name="Kahmann R."/>
        </authorList>
    </citation>
    <scope>PROTEIN SEQUENCE OF 26-44</scope>
    <source>
        <strain>K12</strain>
    </source>
</reference>
<reference key="7">
    <citation type="journal article" date="1988" name="Arch. Biochem. Biophys.">
        <title>Purification and characterization of glpQ-encoded glycerophosphodiester phosphodiesterase from Escherichia coli K-12.</title>
        <authorList>
            <person name="Larson T.J."/>
            <person name="van Loo-Bhattacharya A.T."/>
        </authorList>
    </citation>
    <scope>SUBUNIT</scope>
    <scope>SUBCELLULAR LOCATION</scope>
    <scope>CATALYTIC ACTIVITY</scope>
    <scope>BIOPHYSICOCHEMICAL PROPERTIES</scope>
    <scope>COFACTOR</scope>
    <source>
        <strain>K12</strain>
    </source>
</reference>
<reference key="8">
    <citation type="journal article" date="1997" name="Electrophoresis">
        <title>Escherichia coli proteome analysis using the gene-protein database.</title>
        <authorList>
            <person name="VanBogelen R.A."/>
            <person name="Abshire K.Z."/>
            <person name="Moldover B."/>
            <person name="Olson E.R."/>
            <person name="Neidhardt F.C."/>
        </authorList>
    </citation>
    <scope>IDENTIFICATION BY 2D-GEL</scope>
</reference>
<reference evidence="10" key="9">
    <citation type="submission" date="2005-01" db="PDB data bank">
        <title>Crystal structure of periplasmic glycerophosphodiester phosphodiesterase from Escherichia coli.</title>
        <authorList>
            <consortium name="New York structural genomix research consortium (NYSGXRC)"/>
        </authorList>
    </citation>
    <scope>X-RAY CRYSTALLOGRAPHY (1.7 ANGSTROMS) OF 1-356 IN COMPLEX WITH CALCIUM IONS</scope>
    <scope>SUBUNIT</scope>
</reference>
<reference evidence="9" key="10">
    <citation type="submission" date="2007-05" db="PDB data bank">
        <title>The crystal structure of glycerophosphoryl diester phosphodiesterase from E. coli.</title>
        <authorList>
            <consortium name="Midwest center for structural genomics (MCSG)"/>
        </authorList>
    </citation>
    <scope>X-RAY CRYSTALLOGRAPHY (2.0 ANGSTROMS) OF 25-358 IN COMPLEX WITH MAGNESIUM IONS</scope>
    <scope>SUBUNIT</scope>
</reference>
<proteinExistence type="evidence at protein level"/>
<dbReference type="EC" id="3.1.4.46" evidence="4"/>
<dbReference type="EMBL" id="X56907">
    <property type="protein sequence ID" value="CAA40223.1"/>
    <property type="molecule type" value="Genomic_DNA"/>
</dbReference>
<dbReference type="EMBL" id="U00096">
    <property type="protein sequence ID" value="AAC75299.1"/>
    <property type="molecule type" value="Genomic_DNA"/>
</dbReference>
<dbReference type="EMBL" id="AP009048">
    <property type="protein sequence ID" value="BAA16058.1"/>
    <property type="molecule type" value="Genomic_DNA"/>
</dbReference>
<dbReference type="EMBL" id="Y00536">
    <property type="protein sequence ID" value="CAA68599.1"/>
    <property type="molecule type" value="Genomic_DNA"/>
</dbReference>
<dbReference type="PIR" id="S15945">
    <property type="entry name" value="S15945"/>
</dbReference>
<dbReference type="RefSeq" id="NP_416742.1">
    <property type="nucleotide sequence ID" value="NC_000913.3"/>
</dbReference>
<dbReference type="RefSeq" id="WP_000779105.1">
    <property type="nucleotide sequence ID" value="NZ_LN832404.1"/>
</dbReference>
<dbReference type="PDB" id="1T8Q">
    <property type="method" value="X-ray"/>
    <property type="resolution" value="2.00 A"/>
    <property type="chains" value="A/B/C/D=25-358"/>
</dbReference>
<dbReference type="PDB" id="1YDY">
    <property type="method" value="X-ray"/>
    <property type="resolution" value="1.70 A"/>
    <property type="chains" value="A/B=1-356"/>
</dbReference>
<dbReference type="PDBsum" id="1T8Q"/>
<dbReference type="PDBsum" id="1YDY"/>
<dbReference type="SMR" id="P09394"/>
<dbReference type="BioGRID" id="4260486">
    <property type="interactions" value="189"/>
</dbReference>
<dbReference type="FunCoup" id="P09394">
    <property type="interactions" value="88"/>
</dbReference>
<dbReference type="IntAct" id="P09394">
    <property type="interactions" value="11"/>
</dbReference>
<dbReference type="STRING" id="511145.b2239"/>
<dbReference type="jPOST" id="P09394"/>
<dbReference type="PaxDb" id="511145-b2239"/>
<dbReference type="DNASU" id="946725"/>
<dbReference type="EnsemblBacteria" id="AAC75299">
    <property type="protein sequence ID" value="AAC75299"/>
    <property type="gene ID" value="b2239"/>
</dbReference>
<dbReference type="GeneID" id="946725"/>
<dbReference type="KEGG" id="ecj:JW2233"/>
<dbReference type="KEGG" id="eco:b2239"/>
<dbReference type="KEGG" id="ecoc:C3026_12510"/>
<dbReference type="PATRIC" id="fig|511145.12.peg.2328"/>
<dbReference type="EchoBASE" id="EB0394"/>
<dbReference type="eggNOG" id="COG0584">
    <property type="taxonomic scope" value="Bacteria"/>
</dbReference>
<dbReference type="HOGENOM" id="CLU_030226_1_0_6"/>
<dbReference type="InParanoid" id="P09394"/>
<dbReference type="OMA" id="CRHENDI"/>
<dbReference type="OrthoDB" id="9795622at2"/>
<dbReference type="PhylomeDB" id="P09394"/>
<dbReference type="BioCyc" id="EcoCyc:GLYCPDIESTER-PERI-MONOMER"/>
<dbReference type="BioCyc" id="MetaCyc:GLYCPDIESTER-PERI-MONOMER"/>
<dbReference type="BRENDA" id="3.1.4.46">
    <property type="organism ID" value="2026"/>
</dbReference>
<dbReference type="SABIO-RK" id="P09394"/>
<dbReference type="EvolutionaryTrace" id="P09394"/>
<dbReference type="PRO" id="PR:P09394"/>
<dbReference type="Proteomes" id="UP000000625">
    <property type="component" value="Chromosome"/>
</dbReference>
<dbReference type="GO" id="GO:0042597">
    <property type="term" value="C:periplasmic space"/>
    <property type="evidence" value="ECO:0000314"/>
    <property type="project" value="EcoCyc"/>
</dbReference>
<dbReference type="GO" id="GO:0005509">
    <property type="term" value="F:calcium ion binding"/>
    <property type="evidence" value="ECO:0000314"/>
    <property type="project" value="EcoCyc"/>
</dbReference>
<dbReference type="GO" id="GO:0008889">
    <property type="term" value="F:glycerophosphodiester phosphodiesterase activity"/>
    <property type="evidence" value="ECO:0000314"/>
    <property type="project" value="EcoCyc"/>
</dbReference>
<dbReference type="GO" id="GO:0046872">
    <property type="term" value="F:metal ion binding"/>
    <property type="evidence" value="ECO:0000314"/>
    <property type="project" value="EcoCyc"/>
</dbReference>
<dbReference type="GO" id="GO:0006071">
    <property type="term" value="P:glycerol metabolic process"/>
    <property type="evidence" value="ECO:0007669"/>
    <property type="project" value="UniProtKB-KW"/>
</dbReference>
<dbReference type="GO" id="GO:0046475">
    <property type="term" value="P:glycerophospholipid catabolic process"/>
    <property type="evidence" value="ECO:0000314"/>
    <property type="project" value="EcoCyc"/>
</dbReference>
<dbReference type="CDD" id="cd08600">
    <property type="entry name" value="GDPD_EcGlpQ_like"/>
    <property type="match status" value="1"/>
</dbReference>
<dbReference type="FunFam" id="3.20.20.190:FF:000009">
    <property type="entry name" value="Glycerophosphodiester phosphodiesterase, periplasmic"/>
    <property type="match status" value="1"/>
</dbReference>
<dbReference type="Gene3D" id="3.20.20.190">
    <property type="entry name" value="Phosphatidylinositol (PI) phosphodiesterase"/>
    <property type="match status" value="1"/>
</dbReference>
<dbReference type="InterPro" id="IPR030395">
    <property type="entry name" value="GP_PDE_dom"/>
</dbReference>
<dbReference type="InterPro" id="IPR017946">
    <property type="entry name" value="PLC-like_Pdiesterase_TIM-brl"/>
</dbReference>
<dbReference type="NCBIfam" id="NF008354">
    <property type="entry name" value="PRK11143.1"/>
    <property type="match status" value="1"/>
</dbReference>
<dbReference type="PANTHER" id="PTHR43620:SF7">
    <property type="entry name" value="GLYCEROPHOSPHODIESTER PHOSPHODIESTERASE GDPD5-RELATED"/>
    <property type="match status" value="1"/>
</dbReference>
<dbReference type="PANTHER" id="PTHR43620">
    <property type="entry name" value="GLYCEROPHOSPHORYL DIESTER PHOSPHODIESTERASE"/>
    <property type="match status" value="1"/>
</dbReference>
<dbReference type="Pfam" id="PF03009">
    <property type="entry name" value="GDPD"/>
    <property type="match status" value="1"/>
</dbReference>
<dbReference type="SUPFAM" id="SSF51695">
    <property type="entry name" value="PLC-like phosphodiesterases"/>
    <property type="match status" value="1"/>
</dbReference>
<dbReference type="PROSITE" id="PS51704">
    <property type="entry name" value="GP_PDE"/>
    <property type="match status" value="1"/>
</dbReference>
<gene>
    <name type="primary">glpQ</name>
    <name type="ordered locus">b2239</name>
    <name type="ordered locus">JW2233</name>
</gene>
<evidence type="ECO:0000250" key="1">
    <source>
        <dbReference type="UniProtKB" id="Q8RB32"/>
    </source>
</evidence>
<evidence type="ECO:0000255" key="2">
    <source>
        <dbReference type="PROSITE-ProRule" id="PRU01041"/>
    </source>
</evidence>
<evidence type="ECO:0000269" key="3">
    <source>
    </source>
</evidence>
<evidence type="ECO:0000269" key="4">
    <source>
    </source>
</evidence>
<evidence type="ECO:0000269" key="5">
    <source>
    </source>
</evidence>
<evidence type="ECO:0000269" key="6">
    <source ref="10"/>
</evidence>
<evidence type="ECO:0000269" key="7">
    <source ref="9"/>
</evidence>
<evidence type="ECO:0000305" key="8"/>
<evidence type="ECO:0007744" key="9">
    <source>
        <dbReference type="PDB" id="1T8Q"/>
    </source>
</evidence>
<evidence type="ECO:0007744" key="10">
    <source>
        <dbReference type="PDB" id="1YDY"/>
    </source>
</evidence>
<evidence type="ECO:0007829" key="11">
    <source>
        <dbReference type="PDB" id="1YDY"/>
    </source>
</evidence>
<feature type="signal peptide" evidence="3 5">
    <location>
        <begin position="1"/>
        <end position="25"/>
    </location>
</feature>
<feature type="chain" id="PRO_0000012594" description="Glycerophosphodiester phosphodiesterase, periplasmic">
    <location>
        <begin position="26"/>
        <end position="358"/>
    </location>
</feature>
<feature type="domain" description="GP-PDE" evidence="2">
    <location>
        <begin position="31"/>
        <end position="355"/>
    </location>
</feature>
<feature type="active site" description="Proton acceptor" evidence="1">
    <location>
        <position position="36"/>
    </location>
</feature>
<feature type="active site" description="Proton donor" evidence="1">
    <location>
        <position position="78"/>
    </location>
</feature>
<feature type="binding site" evidence="7 9 10">
    <location>
        <position position="63"/>
    </location>
    <ligand>
        <name>Ca(2+)</name>
        <dbReference type="ChEBI" id="CHEBI:29108"/>
    </ligand>
</feature>
<feature type="binding site" evidence="7 9 10">
    <location>
        <position position="65"/>
    </location>
    <ligand>
        <name>Ca(2+)</name>
        <dbReference type="ChEBI" id="CHEBI:29108"/>
    </ligand>
</feature>
<feature type="binding site" evidence="7 9 10">
    <location>
        <position position="171"/>
    </location>
    <ligand>
        <name>Ca(2+)</name>
        <dbReference type="ChEBI" id="CHEBI:29108"/>
    </ligand>
</feature>
<feature type="sequence conflict" description="In Ref. 6; AA sequence." evidence="8" ref="6">
    <original>D</original>
    <variation>I</variation>
    <location>
        <position position="27"/>
    </location>
</feature>
<feature type="strand" evidence="11">
    <location>
        <begin position="32"/>
        <end position="35"/>
    </location>
</feature>
<feature type="turn" evidence="11">
    <location>
        <begin position="36"/>
        <end position="42"/>
    </location>
</feature>
<feature type="helix" evidence="11">
    <location>
        <begin position="48"/>
        <end position="56"/>
    </location>
</feature>
<feature type="strand" evidence="11">
    <location>
        <begin position="60"/>
        <end position="68"/>
    </location>
</feature>
<feature type="strand" evidence="11">
    <location>
        <begin position="74"/>
        <end position="76"/>
    </location>
</feature>
<feature type="strand" evidence="11">
    <location>
        <begin position="78"/>
        <end position="81"/>
    </location>
</feature>
<feature type="turn" evidence="11">
    <location>
        <begin position="83"/>
        <end position="85"/>
    </location>
</feature>
<feature type="helix" evidence="11">
    <location>
        <begin position="88"/>
        <end position="91"/>
    </location>
</feature>
<feature type="helix" evidence="11">
    <location>
        <begin position="104"/>
        <end position="106"/>
    </location>
</feature>
<feature type="helix" evidence="11">
    <location>
        <begin position="109"/>
        <end position="114"/>
    </location>
</feature>
<feature type="strand" evidence="11">
    <location>
        <begin position="121"/>
        <end position="124"/>
    </location>
</feature>
<feature type="strand" evidence="11">
    <location>
        <begin position="127"/>
        <end position="132"/>
    </location>
</feature>
<feature type="helix" evidence="11">
    <location>
        <begin position="148"/>
        <end position="162"/>
    </location>
</feature>
<feature type="strand" evidence="11">
    <location>
        <begin position="167"/>
        <end position="172"/>
    </location>
</feature>
<feature type="helix" evidence="11">
    <location>
        <begin position="175"/>
        <end position="180"/>
    </location>
</feature>
<feature type="helix" evidence="11">
    <location>
        <begin position="185"/>
        <end position="195"/>
    </location>
</feature>
<feature type="strand" evidence="11">
    <location>
        <begin position="203"/>
        <end position="210"/>
    </location>
</feature>
<feature type="helix" evidence="11">
    <location>
        <begin position="212"/>
        <end position="220"/>
    </location>
</feature>
<feature type="helix" evidence="11">
    <location>
        <begin position="222"/>
        <end position="226"/>
    </location>
</feature>
<feature type="strand" evidence="11">
    <location>
        <begin position="231"/>
        <end position="236"/>
    </location>
</feature>
<feature type="helix" evidence="11">
    <location>
        <begin position="239"/>
        <end position="241"/>
    </location>
</feature>
<feature type="strand" evidence="11">
    <location>
        <begin position="245"/>
        <end position="247"/>
    </location>
</feature>
<feature type="strand" evidence="11">
    <location>
        <begin position="253"/>
        <end position="255"/>
    </location>
</feature>
<feature type="helix" evidence="11">
    <location>
        <begin position="259"/>
        <end position="262"/>
    </location>
</feature>
<feature type="helix" evidence="11">
    <location>
        <begin position="266"/>
        <end position="270"/>
    </location>
</feature>
<feature type="turn" evidence="11">
    <location>
        <begin position="271"/>
        <end position="273"/>
    </location>
</feature>
<feature type="strand" evidence="11">
    <location>
        <begin position="275"/>
        <end position="280"/>
    </location>
</feature>
<feature type="helix" evidence="11">
    <location>
        <begin position="281"/>
        <end position="283"/>
    </location>
</feature>
<feature type="helix" evidence="11">
    <location>
        <begin position="299"/>
        <end position="305"/>
    </location>
</feature>
<feature type="helix" evidence="11">
    <location>
        <begin position="327"/>
        <end position="335"/>
    </location>
</feature>
<feature type="strand" evidence="11">
    <location>
        <begin position="341"/>
        <end position="346"/>
    </location>
</feature>
<feature type="helix" evidence="11">
    <location>
        <begin position="348"/>
        <end position="355"/>
    </location>
</feature>